<protein>
    <recommendedName>
        <fullName evidence="27">5'-3' exonuclease PLD3</fullName>
        <ecNumber evidence="17 18">3.1.16.1</ecNumber>
    </recommendedName>
    <alternativeName>
        <fullName evidence="35">(S,S)-bis(monoacylglycero)phosphate synthase PLD3</fullName>
        <ecNumber evidence="24">3.1.4.-</ecNumber>
    </alternativeName>
    <alternativeName>
        <fullName>HindIII K4L homolog</fullName>
    </alternativeName>
    <alternativeName>
        <fullName evidence="25">Hu-K4</fullName>
    </alternativeName>
    <alternativeName>
        <fullName>Phospholipase D3</fullName>
    </alternativeName>
</protein>
<feature type="chain" id="PRO_0000280326" description="5'-3' exonuclease PLD3">
    <location>
        <begin position="1"/>
        <end position="490"/>
    </location>
</feature>
<feature type="topological domain" description="Cytoplasmic" evidence="28">
    <location>
        <begin position="1"/>
        <end position="38"/>
    </location>
</feature>
<feature type="transmembrane region" description="Helical; Signal-anchor for type II membrane protein" evidence="5">
    <location>
        <begin position="39"/>
        <end position="59"/>
    </location>
</feature>
<feature type="topological domain" description="Lumenal" evidence="28">
    <location>
        <begin position="60"/>
        <end position="490"/>
    </location>
</feature>
<feature type="domain" description="PLD phosphodiesterase 1" evidence="2">
    <location>
        <begin position="196"/>
        <end position="223"/>
    </location>
</feature>
<feature type="domain" description="PLD phosphodiesterase 2" evidence="2">
    <location>
        <begin position="411"/>
        <end position="437"/>
    </location>
</feature>
<feature type="active site" evidence="2">
    <location>
        <position position="201"/>
    </location>
</feature>
<feature type="active site" description="Proton donor" evidence="2">
    <location>
        <position position="201"/>
    </location>
</feature>
<feature type="active site" evidence="2">
    <location>
        <position position="203"/>
    </location>
</feature>
<feature type="active site" evidence="2">
    <location>
        <position position="208"/>
    </location>
</feature>
<feature type="active site" description="Nucleophile" evidence="1">
    <location>
        <position position="416"/>
    </location>
</feature>
<feature type="binding site" evidence="1">
    <location>
        <position position="201"/>
    </location>
    <ligand>
        <name>phosphate</name>
        <dbReference type="ChEBI" id="CHEBI:43474"/>
    </ligand>
    <ligandPart>
        <name>5'-phosphate 2'-deoxynucleoside residue</name>
        <dbReference type="ChEBI" id="CHEBI:136412"/>
    </ligandPart>
</feature>
<feature type="binding site" evidence="1">
    <location>
        <position position="203"/>
    </location>
    <ligand>
        <name>phosphate</name>
        <dbReference type="ChEBI" id="CHEBI:43474"/>
    </ligand>
    <ligandPart>
        <name>5'-phosphate 2'-deoxynucleoside residue</name>
        <dbReference type="ChEBI" id="CHEBI:136412"/>
    </ligandPart>
</feature>
<feature type="binding site" evidence="1">
    <location>
        <position position="218"/>
    </location>
    <ligand>
        <name>phosphate</name>
        <dbReference type="ChEBI" id="CHEBI:43474"/>
    </ligand>
    <ligandPart>
        <name>5'-phosphate 2'-deoxynucleoside residue</name>
        <dbReference type="ChEBI" id="CHEBI:136412"/>
    </ligandPart>
</feature>
<feature type="binding site" evidence="1">
    <location>
        <position position="416"/>
    </location>
    <ligand>
        <name>phosphate</name>
        <dbReference type="ChEBI" id="CHEBI:43474"/>
    </ligand>
    <ligandPart>
        <name>5'-phosphate 2'-deoxynucleoside residue</name>
        <dbReference type="ChEBI" id="CHEBI:136412"/>
    </ligandPart>
</feature>
<feature type="binding site" evidence="21 38">
    <location>
        <position position="438"/>
    </location>
    <ligand>
        <name>Mg(2+)</name>
        <dbReference type="ChEBI" id="CHEBI:18420"/>
    </ligand>
</feature>
<feature type="site" description="Cleavage; by lysosomal cysteine proteases" evidence="29 33">
    <location>
        <begin position="71"/>
        <end position="72"/>
    </location>
</feature>
<feature type="glycosylation site" description="N-linked (GlcNAc...) asparagine" evidence="4 21">
    <location>
        <position position="97"/>
    </location>
</feature>
<feature type="glycosylation site" description="N-linked (GlcNAc...) asparagine" evidence="4 21">
    <location>
        <position position="132"/>
    </location>
</feature>
<feature type="glycosylation site" description="N-linked (GlcNAc...) asparagine" evidence="21">
    <location>
        <position position="236"/>
    </location>
</feature>
<feature type="glycosylation site" description="N-linked (GlcNAc...) asparagine" evidence="21">
    <location>
        <position position="284"/>
    </location>
</feature>
<feature type="glycosylation site" description="N-linked (GlcNAc...) asparagine" evidence="21">
    <location>
        <position position="387"/>
    </location>
</feature>
<feature type="disulfide bond" evidence="1">
    <location>
        <begin position="77"/>
        <end position="239"/>
    </location>
</feature>
<feature type="disulfide bond" evidence="1">
    <location>
        <begin position="81"/>
        <end position="237"/>
    </location>
</feature>
<feature type="disulfide bond" evidence="1">
    <location>
        <begin position="366"/>
        <end position="487"/>
    </location>
</feature>
<feature type="sequence variant" id="VAR_075905" description="In dbSNP:rs142070038." evidence="12">
    <original>G</original>
    <variation>S</variation>
    <location>
        <position position="63"/>
    </location>
</feature>
<feature type="sequence variant" id="VAR_075906" description="In dbSNP:rs138674695." evidence="12">
    <original>P</original>
    <variation>A</variation>
    <location>
        <position position="76"/>
    </location>
</feature>
<feature type="sequence variant" id="VAR_075907" description="In dbSNP:rs374184677." evidence="12">
    <original>V</original>
    <variation>M</variation>
    <location>
        <position position="159"/>
    </location>
</feature>
<feature type="sequence variant" id="VAR_075908" evidence="12">
    <original>R</original>
    <variation>C</variation>
    <location>
        <position position="162"/>
    </location>
</feature>
<feature type="sequence variant" id="VAR_075909" description="In dbSNP:rs866850284." evidence="12">
    <original>P</original>
    <variation>S</variation>
    <location>
        <position position="173"/>
    </location>
</feature>
<feature type="sequence variant" id="VAR_075910" description="In dbSNP:rs780604999." evidence="12">
    <original>A</original>
    <variation>G</variation>
    <location>
        <position position="175"/>
    </location>
</feature>
<feature type="sequence variant" id="VAR_075911" description="In dbSNP:rs1326374111." evidence="12">
    <original>R</original>
    <variation>C</variation>
    <location>
        <position position="188"/>
    </location>
</feature>
<feature type="sequence variant" id="VAR_075912" description="In dbSNP:rs765630414." evidence="12">
    <original>R</original>
    <variation>H</variation>
    <location>
        <position position="222"/>
    </location>
</feature>
<feature type="sequence variant" id="VAR_071186" description="Found in patients with Alzheimer disease; uncertain significance; does not reduce either amyloid-beta levels or APP expression; no effect on protein maturation or trafficking to lysosomes; partial loss of dimer formation; decreased or complete loss of exonuclease activity toward mitochondrial CpG-rich ssDNA fragments resulting in DNA build-up in the endolysosomal compartment, increased TLR9 pro-inflammatory signaling and increased mitophagy; decreased exonuclease activity toward RNA substrate; decreased (S,S)- BMP synthase activity; dbSNP:rs145999145." evidence="6 7 8 9 10 11 12 13 20 22 23 24">
    <original>V</original>
    <variation>M</variation>
    <location>
        <position position="232"/>
    </location>
</feature>
<feature type="sequence variant" id="VAR_075913" description="In dbSNP:rs757965784." evidence="12">
    <original>R</original>
    <variation>Q</variation>
    <location>
        <position position="242"/>
    </location>
</feature>
<feature type="sequence variant" id="VAR_075914" description="In dbSNP:rs746715924." evidence="12">
    <original>E</original>
    <variation>G</variation>
    <location>
        <position position="249"/>
    </location>
</feature>
<feature type="sequence variant" id="VAR_075915" description="In dbSNP:rs144312764." evidence="12">
    <original>R</original>
    <variation>C</variation>
    <location>
        <position position="272"/>
    </location>
</feature>
<feature type="sequence variant" id="VAR_075916" description="No effect on protein maturation or trafficking to lysosomes; displays differential exonuclease activity depending on ssDNA sequence, showing increased activity toward ATP6 CpG-rich ssDNA and normal activity toward ND4L CpG-rich ssDNA; increases mitophagy rate; dbSNP:rs200274020." evidence="12 20">
    <original>N</original>
    <variation>S</variation>
    <location>
        <position position="284"/>
    </location>
</feature>
<feature type="sequence variant" id="VAR_075917" description="In dbSNP:rs368737000." evidence="12">
    <original>A</original>
    <variation>V</variation>
    <location>
        <position position="293"/>
    </location>
</feature>
<feature type="sequence variant" id="VAR_075918" evidence="12">
    <original>P</original>
    <variation>L</variation>
    <location>
        <position position="297"/>
    </location>
</feature>
<feature type="sequence variant" id="VAR_075919" description="In dbSNP:rs146083475." evidence="12">
    <original>C</original>
    <variation>Y</variation>
    <location>
        <position position="300"/>
    </location>
</feature>
<feature type="sequence variant" id="VAR_075920" description="In SCA46; uncertain significance; induces retention in the ER; reduced lysosomal localization; reduced proteolytic cleavage; loss of dimerization; loss of exonuclease activity toward ssDNA and RNA substrates; loss of (S,S)-BMP synthase activity; dbSNP:rs537053537." evidence="12 14 18 22 23 24">
    <original>L</original>
    <variation>P</variation>
    <location>
        <position position="308"/>
    </location>
</feature>
<feature type="sequence variant" id="VAR_075921" description="In dbSNP:rs370488565." evidence="12">
    <original>V</original>
    <variation>I</variation>
    <location>
        <position position="358"/>
    </location>
</feature>
<feature type="sequence variant" id="VAR_075922" description="No effect on protein maturation or trafficking to lysosomes; displays differential exonuclease activity depending on ssDNA sequence, showing increased activity toward ATP6 CpG-rich ssDNA sequence and normal activity toward ND4L CpG-rich ssDNA sequence; increases mitophagy rate; dbSNP:rs745463234." evidence="12 20">
    <original>T</original>
    <variation>A</variation>
    <location>
        <position position="426"/>
    </location>
</feature>
<feature type="sequence variant" id="VAR_075923" description="In dbSNP:rs986006936." evidence="12">
    <original>G</original>
    <variation>R</variation>
    <location>
        <position position="429"/>
    </location>
</feature>
<feature type="mutagenesis site" description="No effect on protein maturation or trafficking to lysosomes. Decreases exonuclease activity toward mitochondrial CpG-rich ssDNA fragments resulting in mitochondrial DNA build-up in the endolysosomal compartment and increased mitophagy rate associated with accumulation of amyloid precursor protein-derived C-terminal fragments (APP-CTFs) in autophagosomes/autolysosomes." evidence="20">
    <original>M</original>
    <variation>R</variation>
    <location>
        <position position="6"/>
    </location>
</feature>
<feature type="mutagenesis site" description="Slightly increases plasma membrane localization, does not affect delivery to lysosomes." evidence="16">
    <original>Y</original>
    <variation>A</variation>
    <location>
        <position position="7"/>
    </location>
</feature>
<feature type="mutagenesis site" description="Tends to form aggregates. Decreases exonuclease activity toward ssDNA." evidence="22">
    <original>I</original>
    <variation>M</variation>
    <location>
        <position position="163"/>
    </location>
</feature>
<feature type="mutagenesis site" description="Loss of (S,S)-BMP synthase activity. No effect on protein expression or localization to lysosomes." evidence="24">
    <original>H</original>
    <variation>A</variation>
    <location>
        <position position="201"/>
    </location>
</feature>
<feature type="mutagenesis site" description="Decreases RNA binding; when associated with D-337 and N-416. Almost complete loss of RNA binding; when associated with D-340 and N-416." evidence="23">
    <original>H</original>
    <variation>N</variation>
    <location>
        <position position="201"/>
    </location>
</feature>
<feature type="mutagenesis site" description="Loss of (S,S)-BMP synthase activity. No effect on protein expression or localization to lysosomes." evidence="24">
    <original>K</original>
    <variation>A</variation>
    <location>
        <position position="203"/>
    </location>
</feature>
<feature type="mutagenesis site" description="Loss of (S,S)-BMP synthase activity. No effect on protein expression or localization to lysosomes." evidence="24">
    <original>D</original>
    <variation>A</variation>
    <location>
        <position position="208"/>
    </location>
</feature>
<feature type="mutagenesis site" description="Decreases exonuclease activity toward CpG-free or CpG-rich ssDNA substrates. Increases mitophagy rate. No effect on protein maturation or trafficking to lysosomes." evidence="20">
    <original>K</original>
    <variation>R</variation>
    <location>
        <position position="228"/>
    </location>
</feature>
<feature type="mutagenesis site" description="Increases exonuclease activity toward CpG-free ssDNA substrates. Slightly decreases exonuclease activity toward a CpG-rich ATP6 ssDNA sequence. Loss of exonuclease activity toward a CpG-rich ND4L ssDNA sequence. Increases mitophagy rate. No effect on protein maturation or trafficking to lysosomes." evidence="20">
    <original>N</original>
    <variation>S</variation>
    <location>
        <position position="236"/>
    </location>
</feature>
<feature type="mutagenesis site" description="No effect on proteolytical processing or localization to lysosomes." evidence="21">
    <original>C</original>
    <variation>S</variation>
    <location>
        <position position="300"/>
    </location>
</feature>
<feature type="mutagenesis site" description="Decreases exonuclease activity toward RNA. Decreases RNA binding; when associated with N-201 and N-416. Results in a 10-fold reduction of exonuclease activity toward RNA; when associated with N-339." evidence="23">
    <original>H</original>
    <variation>D</variation>
    <location>
        <position position="337"/>
    </location>
</feature>
<feature type="mutagenesis site" description="Results in a 10-fold reduction of exonuclease activity toward RNA; when associated with N-337." evidence="23">
    <original>H</original>
    <variation>D</variation>
    <location>
        <position position="339"/>
    </location>
</feature>
<feature type="mutagenesis site" description="Prevents dimerization resulting in decreased exonuclease activity toward RNA and CpG ssDNA substrates. Almost complete loss of RNA binding; when associated with N-201 and N-416." evidence="23">
    <original>R</original>
    <variation>D</variation>
    <location>
        <position position="340"/>
    </location>
</feature>
<feature type="mutagenesis site" description="Retained in the endoplasmic reticulum. Loss of exonuclease activity toward ssDNA; when associated with A-354; A-377 and A-380." evidence="21">
    <original>R</original>
    <variation>A</variation>
    <location>
        <position position="350"/>
    </location>
</feature>
<feature type="mutagenesis site" description="Retained in the endoplasmic reticulum. Loss of exonuclease activity toward ssDNA; when associated with A-350, A-377 and A-380." evidence="21">
    <original>Y</original>
    <variation>A</variation>
    <location>
        <position position="354"/>
    </location>
</feature>
<feature type="mutagenesis site" description="No effect on exonuclease activity toward ssDNA." evidence="22">
    <original>R</original>
    <variation>H</variation>
    <location>
        <position position="356"/>
    </location>
</feature>
<feature type="mutagenesis site" description="Retained in the endoplasmic reticulum. Loss of exonuclease activity toward ssDNA; when associated with A-350; A-354 and A-380." evidence="21">
    <original>F</original>
    <variation>A</variation>
    <location>
        <position position="377"/>
    </location>
</feature>
<feature type="mutagenesis site" description="Retained in the endoplasmic reticulum. Loss of exonuclease activity toward ssDNA; when associated with A-350; A-354 and A-377." evidence="21">
    <original>S</original>
    <variation>A</variation>
    <location>
        <position position="380"/>
    </location>
</feature>
<feature type="mutagenesis site" description="No effect on exonuclease activity toward RNA and CpG ssDNA." evidence="23">
    <original>H</original>
    <variation>D</variation>
    <location>
        <position position="388"/>
    </location>
</feature>
<feature type="mutagenesis site" description="No effect on exonuclease activity toward RNA and CpG ssDNA." evidence="23">
    <original>H</original>
    <variation>D</variation>
    <location>
        <position position="390"/>
    </location>
</feature>
<feature type="mutagenesis site" description="No effect on exonuclease activity toward ssDNA." evidence="22">
    <original>P</original>
    <variation>S</variation>
    <location>
        <position position="410"/>
    </location>
</feature>
<feature type="mutagenesis site" description="Decreases exonuclease activity toward RNA and ssDNA." evidence="23">
    <original>Y</original>
    <variation>A</variation>
    <location>
        <position position="411"/>
    </location>
</feature>
<feature type="mutagenesis site" description="Loss of (S,S)-BMP synthase activity. No effect on protein expression or localization to lysosomes." evidence="24">
    <original>H</original>
    <variation>A</variation>
    <location>
        <position position="416"/>
    </location>
</feature>
<feature type="mutagenesis site" description="Decreases RNA binding; when associated with N-201 and D-337. Almost complete loss of RNA binding; when associated with N-201 and D-340." evidence="23">
    <original>H</original>
    <variation>N</variation>
    <location>
        <position position="416"/>
    </location>
</feature>
<feature type="mutagenesis site" description="Loss of (S,S)-BMP synthase activity. Loss of exonuclease activity toward ssDNA. No effect on protein expression or localization to lysosomes." evidence="24">
    <original>K</original>
    <variation>A</variation>
    <location>
        <position position="418"/>
    </location>
</feature>
<feature type="mutagenesis site" description="Impairs myotube formation. Loss of exonuclease activity toward ssDNA. No effect on localization to lysosomes." evidence="5 13 21">
    <original>K</original>
    <variation>R</variation>
    <location>
        <position position="418"/>
    </location>
</feature>
<feature type="mutagenesis site" description="Loss of (S,S)-BMP synthase activity. No effect on protein expression or localization to lysosomes. Loss of exonuclease activity toward ssDNA." evidence="21 24">
    <original>E</original>
    <variation>A</variation>
    <location>
        <position position="423"/>
    </location>
</feature>
<feature type="mutagenesis site" description="No effect on (S,S)-BMP synthase activity, protein expression or localization to lysosomes." evidence="24">
    <original>E</original>
    <variation>D</variation>
    <location>
        <position position="423"/>
    </location>
</feature>
<feature type="mutagenesis site" description="Loss of exonuclease activity toward ssDNA. No effect on protein localization to lysosomes." evidence="21">
    <original>N</original>
    <variation>A</variation>
    <location>
        <position position="432"/>
    </location>
</feature>
<feature type="sequence conflict" description="In Ref. 1; AAB16799." evidence="27" ref="1">
    <original>S</original>
    <variation>I</variation>
    <location>
        <position position="473"/>
    </location>
</feature>
<feature type="strand" evidence="40">
    <location>
        <begin position="79"/>
        <end position="88"/>
    </location>
</feature>
<feature type="helix" evidence="40">
    <location>
        <begin position="105"/>
        <end position="115"/>
    </location>
</feature>
<feature type="strand" evidence="40">
    <location>
        <begin position="117"/>
        <end position="125"/>
    </location>
</feature>
<feature type="helix" evidence="40">
    <location>
        <begin position="131"/>
        <end position="134"/>
    </location>
</feature>
<feature type="helix" evidence="40">
    <location>
        <begin position="139"/>
        <end position="141"/>
    </location>
</feature>
<feature type="helix" evidence="40">
    <location>
        <begin position="142"/>
        <end position="151"/>
    </location>
</feature>
<feature type="turn" evidence="40">
    <location>
        <begin position="152"/>
        <end position="154"/>
    </location>
</feature>
<feature type="helix" evidence="40">
    <location>
        <begin position="155"/>
        <end position="157"/>
    </location>
</feature>
<feature type="strand" evidence="40">
    <location>
        <begin position="160"/>
        <end position="166"/>
    </location>
</feature>
<feature type="helix" evidence="40">
    <location>
        <begin position="175"/>
        <end position="183"/>
    </location>
</feature>
<feature type="strand" evidence="40">
    <location>
        <begin position="186"/>
        <end position="190"/>
    </location>
</feature>
<feature type="helix" evidence="40">
    <location>
        <begin position="192"/>
        <end position="196"/>
    </location>
</feature>
<feature type="strand" evidence="40">
    <location>
        <begin position="204"/>
        <end position="207"/>
    </location>
</feature>
<feature type="turn" evidence="40">
    <location>
        <begin position="208"/>
        <end position="210"/>
    </location>
</feature>
<feature type="strand" evidence="40">
    <location>
        <begin position="211"/>
        <end position="216"/>
    </location>
</feature>
<feature type="helix" evidence="40">
    <location>
        <begin position="222"/>
        <end position="225"/>
    </location>
</feature>
<feature type="strand" evidence="40">
    <location>
        <begin position="227"/>
        <end position="236"/>
    </location>
</feature>
<feature type="helix" evidence="40">
    <location>
        <begin position="238"/>
        <end position="254"/>
    </location>
</feature>
<feature type="helix" evidence="40">
    <location>
        <begin position="267"/>
        <end position="269"/>
    </location>
</feature>
<feature type="strand" evidence="40">
    <location>
        <begin position="274"/>
        <end position="277"/>
    </location>
</feature>
<feature type="strand" evidence="40">
    <location>
        <begin position="279"/>
        <end position="283"/>
    </location>
</feature>
<feature type="strand" evidence="40">
    <location>
        <begin position="286"/>
        <end position="295"/>
    </location>
</feature>
<feature type="helix" evidence="40">
    <location>
        <begin position="297"/>
        <end position="299"/>
    </location>
</feature>
<feature type="helix" evidence="40">
    <location>
        <begin position="307"/>
        <end position="317"/>
    </location>
</feature>
<feature type="strand" evidence="40">
    <location>
        <begin position="319"/>
        <end position="327"/>
    </location>
</feature>
<feature type="strand" evidence="40">
    <location>
        <begin position="331"/>
        <end position="333"/>
    </location>
</feature>
<feature type="helix" evidence="40">
    <location>
        <begin position="344"/>
        <end position="356"/>
    </location>
</feature>
<feature type="strand" evidence="40">
    <location>
        <begin position="359"/>
        <end position="365"/>
    </location>
</feature>
<feature type="helix" evidence="40">
    <location>
        <begin position="374"/>
        <end position="382"/>
    </location>
</feature>
<feature type="turn" evidence="40">
    <location>
        <begin position="387"/>
        <end position="390"/>
    </location>
</feature>
<feature type="strand" evidence="40">
    <location>
        <begin position="391"/>
        <end position="398"/>
    </location>
</feature>
<feature type="helix" evidence="40">
    <location>
        <begin position="404"/>
        <end position="407"/>
    </location>
</feature>
<feature type="strand" evidence="40">
    <location>
        <begin position="413"/>
        <end position="415"/>
    </location>
</feature>
<feature type="strand" evidence="40">
    <location>
        <begin position="418"/>
        <end position="424"/>
    </location>
</feature>
<feature type="strand" evidence="40">
    <location>
        <begin position="426"/>
        <end position="431"/>
    </location>
</feature>
<feature type="helix" evidence="40">
    <location>
        <begin position="436"/>
        <end position="439"/>
    </location>
</feature>
<feature type="strand" evidence="40">
    <location>
        <begin position="441"/>
        <end position="449"/>
    </location>
</feature>
<feature type="strand" evidence="40">
    <location>
        <begin position="451"/>
        <end position="455"/>
    </location>
</feature>
<feature type="helix" evidence="40">
    <location>
        <begin position="456"/>
        <end position="469"/>
    </location>
</feature>
<feature type="strand" evidence="41">
    <location>
        <begin position="473"/>
        <end position="475"/>
    </location>
</feature>
<feature type="helix" evidence="40">
    <location>
        <begin position="480"/>
        <end position="482"/>
    </location>
</feature>
<feature type="strand" evidence="40">
    <location>
        <begin position="483"/>
        <end position="485"/>
    </location>
</feature>
<accession>Q8IV08</accession>
<accession>Q92853</accession>
<accession>Q9BW87</accession>
<proteinExistence type="evidence at protein level"/>
<comment type="function">
    <text evidence="5 13 15 17 18 19 20 21 22 23 24">5'-&gt;3' exonuclease that hydrolyzes the phosphodiester bond of single-stranded DNA (ssDNA) and RNA molecules to form nucleoside 3'-monophosphates and 5'-end 5'-hydroxy deoxyribonucleotide/ribonucleotide fragments (PubMed:30111894, PubMed:30312375, PubMed:34620855, PubMed:37225734, PubMed:37994783, PubMed:38537643, PubMed:38697119). Partially redundant with PLD4, can cleave all four nucleotides displaying higher efficiency for ssDNA and RNA fragments initiated with uridine and guanosine residues and lower efficiency for cytidine-initiated substrates (PubMed:30111894, PubMed:30312375, PubMed:34620855, PubMed:37225734, PubMed:37994783, PubMed:38537643, PubMed:38697119). As a result, it does not always degrade polynucleotides to the single nucleotide level, it can stall at specific sites sparing certain fragments from exonucleolytic degradation (PubMed:30111894, PubMed:30312375, PubMed:34620855, PubMed:37225734, PubMed:37994783, PubMed:38537643, PubMed:38697119). Processes self and pathogenic ssDNA and RNA molecules that reach the endolysosomal compartment via phagocytosis or autophagy and may serve as 'danger' signals for recognition by innate immune receptors such as toll-like receptors (TLRs) (PubMed:34620855, PubMed:37225734, PubMed:38697119). Degrades mitochondrial CpG-rich ssDNA fragments to prevent TLR9 activation and autoinflammatory response, but it can cleave viral RNA to generate ligands for TLR7 activation and initiate antiviral immune responses (PubMed:34620855, PubMed:37225734, PubMed:38697119). In plasmacytoid dendritic cells, it cooperates with endonuclease RNASET2 to release 2',3'-cyclic guanosine monophosphate (2',3'-cGMP), a potent stimulatory ligand for TLR7 (PubMed:34620855, PubMed:37225734, PubMed:38697119). Produces 2',3'-cGMPs and cytidine-rich RNA fragments that occupy TLR7 ligand-binding pockets and trigger a signaling-competent state (PubMed:34620855, PubMed:37225734, PubMed:38697119). Can exert polynucleotide phosphatase activity toward 5'-phosphorylated ssDNA substrates although at a slow rate (PubMed:38537643). Transphosphatidylase that catalyzes the exchange with R to S stereo-inversion of the glycerol moiety between (S,R)-lysophosphatidylglycerol (LPG) and monoacylglycerol (MAG) substrates to yield (S,S)-bis(monoacylglycero)phosphate (BMP) (PubMed:39423811). Can synthesize a variety of (S,S)-BMPs representing the main phospholipid constituent of lysosomal intralumenal vesicle (ILV) membranes that bind acid hydrolases for lipid degradation (PubMed:39423811). Regulates the homeostasis and interorganellar communication of the endolysosomal system with an overall impact on cellular removal of dysfunctional organelles via autophagy as well as proper protein and lipid turnover (PubMed:28128235, PubMed:29368044, PubMed:37225734). May play a role in myotube formation in response to ER stress (PubMed:22428023).</text>
</comment>
<comment type="catalytic activity">
    <reaction evidence="17 18 19 20 22">
        <text>Exonucleolytic cleavage in the 5'- to 3'-direction to yield nucleoside 3'-phosphates.</text>
        <dbReference type="EC" id="3.1.16.1"/>
    </reaction>
</comment>
<comment type="catalytic activity">
    <reaction evidence="19">
        <text>a 5'-end 5'-dephospho-ribonucleotidyl-ribonucleotide-RNA + H2O = a ribonucleoside 3'-phosphate + a 5'-end dephospho-ribonucleoside-RNA + H(+)</text>
        <dbReference type="Rhea" id="RHEA:81375"/>
        <dbReference type="Rhea" id="RHEA-COMP:13936"/>
        <dbReference type="Rhea" id="RHEA-COMP:19670"/>
        <dbReference type="ChEBI" id="CHEBI:13197"/>
        <dbReference type="ChEBI" id="CHEBI:15377"/>
        <dbReference type="ChEBI" id="CHEBI:15378"/>
        <dbReference type="ChEBI" id="CHEBI:138284"/>
        <dbReference type="ChEBI" id="CHEBI:231871"/>
    </reaction>
    <physiologicalReaction direction="left-to-right" evidence="31">
        <dbReference type="Rhea" id="RHEA:81376"/>
    </physiologicalReaction>
</comment>
<comment type="catalytic activity">
    <reaction evidence="23">
        <text>a ribonucleoside 3'-phosphate-2'-3'-cyclophospho-GMP + H2O = a ribonucleoside 3'-phosphate + 2',3'-cyclophospho-GMP + H(+)</text>
        <dbReference type="Rhea" id="RHEA:81319"/>
        <dbReference type="ChEBI" id="CHEBI:13197"/>
        <dbReference type="ChEBI" id="CHEBI:15377"/>
        <dbReference type="ChEBI" id="CHEBI:15378"/>
        <dbReference type="ChEBI" id="CHEBI:60837"/>
        <dbReference type="ChEBI" id="CHEBI:231870"/>
    </reaction>
    <physiologicalReaction direction="left-to-right" evidence="23">
        <dbReference type="Rhea" id="RHEA:81320"/>
    </physiologicalReaction>
</comment>
<comment type="catalytic activity">
    <reaction evidence="17 20 22">
        <text>a 5'-end 5'-dephospho-2'-deoxyribonucleotidyl-2'-deoxyribonucleotide in single-stranded DNA + H2O = a 5'-end dephospho-2'-deoxyribonucleoside in single-stranded DNA + a 2'-deoxyribonucleoside 3'-phosphate + H(+)</text>
        <dbReference type="Rhea" id="RHEA:81379"/>
        <dbReference type="Rhea" id="RHEA-COMP:19701"/>
        <dbReference type="Rhea" id="RHEA-COMP:19702"/>
        <dbReference type="ChEBI" id="CHEBI:15377"/>
        <dbReference type="ChEBI" id="CHEBI:15378"/>
        <dbReference type="ChEBI" id="CHEBI:131705"/>
        <dbReference type="ChEBI" id="CHEBI:136416"/>
        <dbReference type="ChEBI" id="CHEBI:231873"/>
    </reaction>
    <physiologicalReaction direction="left-to-right" evidence="30 32 34">
        <dbReference type="Rhea" id="RHEA:81380"/>
    </physiologicalReaction>
</comment>
<comment type="catalytic activity">
    <reaction evidence="22">
        <text>a 5'-end 5'-phospho-2'-deoxyribonucleotide in single-stranded DNA + H2O = a 5'-end 5'-dephospho-2'-deoxyribonucleotide in single-stranded DNA + phosphate</text>
        <dbReference type="Rhea" id="RHEA:82335"/>
        <dbReference type="Rhea" id="RHEA-COMP:19868"/>
        <dbReference type="Rhea" id="RHEA-COMP:19869"/>
        <dbReference type="ChEBI" id="CHEBI:15377"/>
        <dbReference type="ChEBI" id="CHEBI:43474"/>
        <dbReference type="ChEBI" id="CHEBI:136412"/>
        <dbReference type="ChEBI" id="CHEBI:136416"/>
    </reaction>
    <physiologicalReaction direction="left-to-right" evidence="34">
        <dbReference type="Rhea" id="RHEA:82336"/>
    </physiologicalReaction>
</comment>
<comment type="catalytic activity">
    <reaction evidence="24">
        <text>a 3-lyso-sn-glycero-1-phospho-(3'-acyl-1'-sn-glycerol) + a 1-acyl-sn-glycerol = a 3-acyl-sn-glycero-1-phospho-(3'-acyl-1'-sn-glycerol) + glycerol</text>
        <dbReference type="Rhea" id="RHEA:82563"/>
        <dbReference type="ChEBI" id="CHEBI:17754"/>
        <dbReference type="ChEBI" id="CHEBI:64683"/>
        <dbReference type="ChEBI" id="CHEBI:77717"/>
        <dbReference type="ChEBI" id="CHEBI:232393"/>
    </reaction>
    <physiologicalReaction direction="left-to-right" evidence="35">
        <dbReference type="Rhea" id="RHEA:82564"/>
    </physiologicalReaction>
</comment>
<comment type="catalytic activity">
    <reaction evidence="24">
        <text>3-lyso-sn-glycero-1-phospho-(3'-(9Z-octadecenoyl)-1'-sn-glycerol) + 1-(9Z-octadecenoyl)-sn-glycerol = 3-(9Z-octadecenoyl)-sn-glycero-1-phospho-(3'-(9Z-octadecenoyl)-1'-sn-glycerol) + glycerol</text>
        <dbReference type="Rhea" id="RHEA:82567"/>
        <dbReference type="ChEBI" id="CHEBI:17754"/>
        <dbReference type="ChEBI" id="CHEBI:75757"/>
        <dbReference type="ChEBI" id="CHEBI:139150"/>
        <dbReference type="ChEBI" id="CHEBI:232394"/>
    </reaction>
    <physiologicalReaction direction="left-to-right" evidence="35">
        <dbReference type="Rhea" id="RHEA:82568"/>
    </physiologicalReaction>
</comment>
<comment type="activity regulation">
    <text evidence="22">The exonuclease activity toward ssDNA substrate is Ca(2+) and Mg(2+)-independent, but it is inhibited by Fe(2+), Cu(2+) and to a lesser extent Zn(2+) ions.</text>
</comment>
<comment type="biophysicochemical properties">
    <kinetics>
        <KM evidence="19">18 uM for 5'-OH ApA diribonucleotide</KM>
        <KM evidence="19">72 uM for 5'-OH CpA diribonucleotide</KM>
        <KM evidence="19">84 uM for 5'-OH UpA diribonucleotide</KM>
        <KM evidence="19">93 uM for 5'-OH GpA diribonucleotide</KM>
    </kinetics>
    <phDependence>
        <text evidence="17 19 22">Active at acidic pHs.</text>
    </phDependence>
</comment>
<comment type="subunit">
    <text evidence="6 21 23">Homodimer (PubMed:37994783, PubMed:38697119). Interacts with APP.</text>
</comment>
<comment type="interaction">
    <interactant intactId="EBI-2689908">
        <id>Q8IV08</id>
    </interactant>
    <interactant intactId="EBI-12208021">
        <id>Q8TBE1</id>
        <label>CNIH3</label>
    </interactant>
    <organismsDiffer>false</organismsDiffer>
    <experiments>3</experiments>
</comment>
<comment type="interaction">
    <interactant intactId="EBI-2689908">
        <id>Q8IV08</id>
    </interactant>
    <interactant intactId="EBI-300010">
        <id>P19838</id>
        <label>NFKB1</label>
    </interactant>
    <organismsDiffer>false</organismsDiffer>
    <experiments>2</experiments>
</comment>
<comment type="interaction">
    <interactant intactId="EBI-2689908">
        <id>Q8IV08</id>
    </interactant>
    <interactant intactId="EBI-12807478">
        <id>P35372-10</id>
        <label>OPRM1</label>
    </interactant>
    <organismsDiffer>false</organismsDiffer>
    <experiments>3</experiments>
</comment>
<comment type="interaction">
    <interactant intactId="EBI-2689908">
        <id>Q8IV08</id>
    </interactant>
    <interactant intactId="EBI-8640191">
        <id>Q9NRQ5</id>
        <label>SMCO4</label>
    </interactant>
    <organismsDiffer>false</organismsDiffer>
    <experiments>3</experiments>
</comment>
<comment type="subcellular location">
    <subcellularLocation>
        <location evidence="3 5">Endoplasmic reticulum membrane</location>
        <topology evidence="3 5">Single-pass type II membrane protein</topology>
    </subcellularLocation>
    <subcellularLocation>
        <location evidence="16 18 35">Lysosome lumen</location>
    </subcellularLocation>
    <subcellularLocation>
        <location evidence="16">Early endosome membrane</location>
        <topology evidence="3 5">Single-pass type II membrane protein</topology>
    </subcellularLocation>
    <subcellularLocation>
        <location evidence="16">Late endosome membrane</location>
        <topology evidence="3 5">Single-pass type II membrane protein</topology>
    </subcellularLocation>
    <subcellularLocation>
        <location evidence="15">Golgi apparatus membrane</location>
        <topology evidence="15">Single-pass type II membrane protein</topology>
    </subcellularLocation>
    <subcellularLocation>
        <location evidence="15">Endosome membrane</location>
        <topology evidence="15">Single-pass type II membrane protein</topology>
    </subcellularLocation>
    <text evidence="5 15 16">Localizes to ER-associated vesicles in differentiating myotubes (PubMed:22428023). Sorted into intralumenal vesicles (ILVs) in lysosomes. The soluble form in lysosome arises by proteolytic processing of the membrane-bound form (PubMed:29386126). Colocalizes with APP in endosomes (PubMed:29368044).</text>
</comment>
<comment type="tissue specificity">
    <text evidence="3 6 23">Widely expressed. In the brain, high levels of expression are detected in the frontal, temporal and occipital cortices and hippocampus. Expressed at low level in corpus callosum. Expressed in plasmacytoid dendritic cells and monocytes (at protein level).</text>
</comment>
<comment type="domain">
    <text evidence="21 23">The catalytic domain contains two conserved PLD phosphodiesterase HxK(x4)D(E) motifs that accomodate the phosphate group of the nucleic acid substrates, with one nucleophile histidine residue forming a phosphohistidine intermediate and the other histidine protonating the leaving 5'-OH ssDNA/RNA fragment, resulting in the cleavage of the phosphodiester bond. The homodimer has two independent catalytic domains arranged at the dimer interface.</text>
</comment>
<comment type="PTM">
    <text evidence="3 4 14 16 21">N-glycosylated.</text>
</comment>
<comment type="PTM">
    <text evidence="16 21">Proteolytically processed to a soluble active form that is stable within endosomes and lysosomes. During transport through the secretory pathway becomes proteolysed by cysteine proteases, thereby releasing a stable soluble lysosomal lumenal polypeptide, whereas the transmembrane-bound fragment is rapidly degraded. Its transport route to lysosomes involves ubiquitination and the ESCRT complex.</text>
</comment>
<comment type="PTM">
    <text evidence="16">Ubiquitinated at N-terminus. Ubiquitination mediates sorting into lysosomes.</text>
</comment>
<comment type="disease" evidence="14 18 22 23 24">
    <disease id="DI-05144">
        <name>Spinocerebellar ataxia 46</name>
        <acronym>SCA46</acronym>
        <description>A form of spinocerebellar ataxia, a clinically and genetically heterogeneous group of cerebellar disorders. Patients show progressive incoordination of gait and often poor coordination of hands, speech and eye movements, due to degeneration of the cerebellum with variable involvement of the brainstem and spinal cord. SCA46 is a slowly progressive, autosomal dominant form with onset in adulthood.</description>
        <dbReference type="MIM" id="617770"/>
    </disease>
    <text evidence="18">The disease may be caused by variants affecting the gene represented in this entry. There is limited evidences for implication of PLD3 in SCA46. Knockout mice do not present signs of cerebellar degeneration or spinocerebellar ataxia at 9 months of age, challenging the interpretation of the suggested loss-of-function mechanism for PLD3 as the SCA46-causative gene.</text>
</comment>
<comment type="disease">
    <text evidence="6 7 8 9 10 11 12 13">Genetic variants in PLD3 have been suggested to be associated with an increased risk for Alzheimer disease (PubMed:24336208, PubMed:25832409). Further studies, however, did not support PLD3 involvement in this disease (PubMed:25832408, PubMed:25832410, PubMed:25832411, PubMed:25832413, PubMed:26411346). Futhermore, it is controversial whether PLD3 plays a role in amyloid precursor protein processing (APP) or not (PubMed:24336208). In a relevant Alzheimer's disease mouse model PLD3 deficiency does not affect APP metabolism or amyloid plaque burden (PubMed:28128235). However one study shown that PLD3 influences APP processing (PubMed:24336208).</text>
</comment>
<comment type="similarity">
    <text evidence="27">Belongs to the phospholipase D family.</text>
</comment>
<comment type="sequence caution" evidence="27">
    <conflict type="frameshift">
        <sequence resource="EMBL-CDS" id="AAB16799"/>
    </conflict>
</comment>
<reference key="1">
    <citation type="journal article" date="1997" name="Virus Res.">
        <title>A human homolog of the vaccinia virus HindIII K4L gene is a member of the phospholipase D superfamily.</title>
        <authorList>
            <person name="Cao J.X."/>
            <person name="Koop B.F."/>
            <person name="Upton C."/>
        </authorList>
    </citation>
    <scope>NUCLEOTIDE SEQUENCE [MRNA]</scope>
    <source>
        <tissue>Mammary gland</tissue>
    </source>
</reference>
<reference key="2">
    <citation type="journal article" date="2004" name="Genome Res.">
        <title>The status, quality, and expansion of the NIH full-length cDNA project: the Mammalian Gene Collection (MGC).</title>
        <authorList>
            <consortium name="The MGC Project Team"/>
        </authorList>
    </citation>
    <scope>NUCLEOTIDE SEQUENCE [LARGE SCALE MRNA]</scope>
    <source>
        <tissue>Brain</tissue>
        <tissue>Colon</tissue>
        <tissue>Lung</tissue>
    </source>
</reference>
<reference key="3">
    <citation type="journal article" date="2005" name="FEBS J.">
        <title>Hu-K4 is a ubiquitously expressed type 2 transmembrane protein associated with the endoplasmic reticulum.</title>
        <authorList>
            <person name="Munck A."/>
            <person name="Boehm C."/>
            <person name="Seibel N.M."/>
            <person name="Hashemol Hosseini Z."/>
            <person name="Hampe W."/>
        </authorList>
    </citation>
    <scope>SUBCELLULAR LOCATION</scope>
    <scope>TOPOLOGY</scope>
    <scope>TISSUE SPECIFICITY</scope>
    <scope>GLYCOSYLATION</scope>
</reference>
<reference key="4">
    <citation type="journal article" date="2009" name="J. Proteome Res.">
        <title>Glycoproteomics analysis of human liver tissue by combination of multiple enzyme digestion and hydrazide chemistry.</title>
        <authorList>
            <person name="Chen R."/>
            <person name="Jiang X."/>
            <person name="Sun D."/>
            <person name="Han G."/>
            <person name="Wang F."/>
            <person name="Ye M."/>
            <person name="Wang L."/>
            <person name="Zou H."/>
        </authorList>
    </citation>
    <scope>GLYCOSYLATION [LARGE SCALE ANALYSIS] AT ASN-97 AND ASN-132</scope>
    <source>
        <tissue>Liver</tissue>
    </source>
</reference>
<reference key="5">
    <citation type="journal article" date="2011" name="BMC Syst. Biol.">
        <title>Initial characterization of the human central proteome.</title>
        <authorList>
            <person name="Burkard T.R."/>
            <person name="Planyavsky M."/>
            <person name="Kaupe I."/>
            <person name="Breitwieser F.P."/>
            <person name="Buerckstuemmer T."/>
            <person name="Bennett K.L."/>
            <person name="Superti-Furga G."/>
            <person name="Colinge J."/>
        </authorList>
    </citation>
    <scope>IDENTIFICATION BY MASS SPECTROMETRY [LARGE SCALE ANALYSIS]</scope>
</reference>
<reference key="6">
    <citation type="journal article" date="2012" name="PLoS ONE">
        <title>A role for phospholipase D3 in myotube formation.</title>
        <authorList>
            <person name="Osisami M."/>
            <person name="Ali W."/>
            <person name="Frohman M.A."/>
        </authorList>
    </citation>
    <scope>SUBCELLULAR LOCATION</scope>
    <scope>MUTAGENESIS OF LYS-418</scope>
    <scope>FUNCTION</scope>
</reference>
<reference key="7">
    <citation type="journal article" date="2014" name="J. Proteomics">
        <title>An enzyme assisted RP-RPLC approach for in-depth analysis of human liver phosphoproteome.</title>
        <authorList>
            <person name="Bian Y."/>
            <person name="Song C."/>
            <person name="Cheng K."/>
            <person name="Dong M."/>
            <person name="Wang F."/>
            <person name="Huang J."/>
            <person name="Sun D."/>
            <person name="Wang L."/>
            <person name="Ye M."/>
            <person name="Zou H."/>
        </authorList>
    </citation>
    <scope>IDENTIFICATION BY MASS SPECTROMETRY [LARGE SCALE ANALYSIS]</scope>
    <source>
        <tissue>Liver</tissue>
    </source>
</reference>
<reference key="8">
    <citation type="journal article" date="2014" name="Nature">
        <title>Rare coding variants in the phospholipase D3 gene confer risk for Alzheimer's disease.</title>
        <authorList>
            <consortium name="UK Brain Expression Consortium"/>
            <person name="Cruchaga C."/>
            <person name="Karch C.M."/>
            <person name="Jin S.C."/>
            <person name="Benitez B.A."/>
            <person name="Cai Y."/>
            <person name="Guerreiro R."/>
            <person name="Harari O."/>
            <person name="Norton J."/>
            <person name="Budde J."/>
            <person name="Bertelsen S."/>
            <person name="Jeng A.T."/>
            <person name="Cooper B."/>
            <person name="Skorupa T."/>
            <person name="Carrell D."/>
            <person name="Levitch D."/>
            <person name="Hsu S."/>
            <person name="Choi J."/>
            <person name="Ryten M."/>
            <person name="Hardy J."/>
            <person name="Ryten M."/>
            <person name="Trabzuni D."/>
            <person name="Weale M.E."/>
            <person name="Ramasamy A."/>
            <person name="Smith C."/>
            <person name="Sassi C."/>
            <person name="Bras J."/>
            <person name="Gibbs J.R."/>
            <person name="Hernandez D.G."/>
            <person name="Lupton M.K."/>
            <person name="Powell J."/>
            <person name="Forabosco P."/>
            <person name="Ridge P.G."/>
            <person name="Corcoran C.D."/>
            <person name="Tschanz J.T."/>
            <person name="Norton M.C."/>
            <person name="Munger R.G."/>
            <person name="Schmutz C."/>
            <person name="Leary M."/>
            <person name="Demirci F.Y."/>
            <person name="Bamne M.N."/>
            <person name="Wang X."/>
            <person name="Lopez O.L."/>
            <person name="Ganguli M."/>
            <person name="Medway C."/>
            <person name="Turton J."/>
            <person name="Lord J."/>
            <person name="Braae A."/>
            <person name="Barber I."/>
            <person name="Brown K."/>
            <person name="Passmore P."/>
            <person name="Craig D."/>
            <person name="Johnston J."/>
            <person name="McGuinness B."/>
            <person name="Todd S."/>
            <person name="Heun R."/>
            <person name="Kolsch H."/>
            <person name="Kehoe P.G."/>
            <person name="Hooper N.M."/>
            <person name="Vardy E.R."/>
            <person name="Mann D.M."/>
            <person name="Pickering-Brown S."/>
            <person name="Brown K."/>
            <person name="Kalsheker N."/>
            <person name="Lowe J."/>
            <person name="Morgan K."/>
            <person name="David Smith A."/>
            <person name="Wilcock G."/>
            <person name="Warden D."/>
            <person name="Holmes C."/>
            <person name="Pastor P."/>
            <person name="Lorenzo-Betancor O."/>
            <person name="Brkanac Z."/>
            <person name="Scott E."/>
            <person name="Topol E."/>
            <person name="Morgan K."/>
            <person name="Rogaeva E."/>
            <person name="Singleton A.B."/>
            <person name="Hardy J."/>
            <person name="Kamboh M.I."/>
            <person name="St George-Hyslop P."/>
            <person name="Cairns N."/>
            <person name="Morris J.C."/>
            <person name="Kauwe J.S."/>
            <person name="Goate A.M."/>
        </authorList>
    </citation>
    <scope>FUNCTION</scope>
    <scope>POSSIBLE INVOLVEMENT IN ALZHEIMER DISEASE</scope>
    <scope>VARIANT MET-232</scope>
    <scope>TISSUE SPECIFICITY</scope>
    <scope>INTERACTION WITH APP</scope>
</reference>
<reference key="9">
    <citation type="journal article" date="2015" name="Hum. Mutat.">
        <title>Rare variants in PLD3 do not affect risk for early-onset Alzheimer disease in a European consortium cohort.</title>
        <authorList>
            <consortium name="Belgium Neurology (BELNEU) Consortium and the European Early-Onset Dementia (EU EOD) Consortium"/>
            <person name="Cacace R."/>
            <person name="Van den Bossche T."/>
            <person name="Engelborghs S."/>
            <person name="Geerts N."/>
            <person name="Laureys A."/>
            <person name="Dillen L."/>
            <person name="Graff C."/>
            <person name="Thonberg H."/>
            <person name="Chiang H.H."/>
            <person name="Pastor P."/>
            <person name="Ortega-Cubero S."/>
            <person name="Pastor M.A."/>
            <person name="Diehl-Schmid J."/>
            <person name="Alexopoulos P."/>
            <person name="Benussi L."/>
            <person name="Ghidoni R."/>
            <person name="Binetti G."/>
            <person name="Nacmias B."/>
            <person name="Sorbi S."/>
            <person name="Sanchez-Valle R."/>
            <person name="Llado A."/>
            <person name="Gelpi E."/>
            <person name="Almeida M.R."/>
            <person name="Santana I."/>
            <person name="Tsolaki M."/>
            <person name="Koutroumani M."/>
            <person name="Clarimon J."/>
            <person name="Lleo A."/>
            <person name="Fortea J."/>
            <person name="de Mendonca A."/>
            <person name="Martins M."/>
            <person name="Borroni B."/>
            <person name="Padovani A."/>
            <person name="Matej R."/>
            <person name="Rohan Z."/>
            <person name="Vandenbulcke M."/>
            <person name="Vandenberghe R."/>
            <person name="De Deyn P.P."/>
            <person name="Cras P."/>
            <person name="van der Zee J."/>
            <person name="Sleegers K."/>
            <person name="Van Broeckhoven C."/>
        </authorList>
    </citation>
    <scope>LACK OF INVOLVEMENT IN ALZHEIMER DISEASE</scope>
    <scope>VARIANTS SER-63; ALA-76; MET-159; CYS-162; SER-173; GLY-175; CYS-188; HIS-222; MET-232; GLN-242; GLY-249; CYS-272; SER-284; VAL-293; LEU-297; TYR-300; PRO-308; ILE-358; ALA-426 AND ARG-429</scope>
</reference>
<reference key="10">
    <citation type="journal article" date="2015" name="Nature">
        <title>PLD3 and sporadic Alzheimer's disease risk.</title>
        <authorList>
            <person name="Lambert J.C."/>
            <person name="Grenier-Boley B."/>
            <person name="Bellenguez C."/>
            <person name="Pasquier F."/>
            <person name="Campion D."/>
            <person name="Dartigues J.F."/>
            <person name="Berr C."/>
            <person name="Tzourio C."/>
            <person name="Amouyel P."/>
        </authorList>
    </citation>
    <scope>LACK OF INVOLVEMENT IN ALZHEIMER DISEASE</scope>
    <scope>VARIANT MET-232</scope>
</reference>
<reference key="11">
    <citation type="journal article" date="2015" name="Nature">
        <title>PLD3 variants in population studies.</title>
        <authorList>
            <person name="van der Lee S.J."/>
            <person name="Holstege H."/>
            <person name="Wong T.H."/>
            <person name="Jakobsdottir J."/>
            <person name="Bis J.C."/>
            <person name="Chouraki V."/>
            <person name="van Rooij J.G."/>
            <person name="Grove M.L."/>
            <person name="Smith A.V."/>
            <person name="Amin N."/>
            <person name="Choi S.H."/>
            <person name="Beiser A.S."/>
            <person name="Garcia M.E."/>
            <person name="van Ijcken W.F."/>
            <person name="Pijnenburg Y.A."/>
            <person name="Louwersheimer E."/>
            <person name="Brouwer R.W."/>
            <person name="van den Hout M.C."/>
            <person name="Oole E."/>
            <person name="Eirkisdottir G."/>
            <person name="Levy D."/>
            <person name="Rotter J.I."/>
            <person name="Emilsson V."/>
            <person name="O'Donnell C.J."/>
            <person name="Aspelund T."/>
            <person name="Uitterlinden A.G."/>
            <person name="Launer L.J."/>
            <person name="Hofman A."/>
            <person name="Boerwinkle E."/>
            <person name="Psaty B.M."/>
            <person name="DeStefano A.L."/>
            <person name="Scheltens P."/>
            <person name="Seshadri S."/>
            <person name="van Swieten J.C."/>
            <person name="Gudnason V."/>
            <person name="van der Flier W.M."/>
            <person name="Ikram M.A."/>
            <person name="van Duijn C.M."/>
        </authorList>
    </citation>
    <scope>LACK OF INVOLVEMENT IN ALZHEIMER DISEASE</scope>
    <scope>VARIANT MET-232</scope>
</reference>
<reference key="12">
    <citation type="journal article" date="2015" name="Nature">
        <title>PLD3 in non-familial Alzheimer's disease.</title>
        <authorList>
            <person name="Heilmann S."/>
            <person name="Drichel D."/>
            <person name="Clarimon J."/>
            <person name="Fernandez V."/>
            <person name="Lacour A."/>
            <person name="Wagner H."/>
            <person name="Thelen M."/>
            <person name="Hernandez I."/>
            <person name="Fortea J."/>
            <person name="Alegret M."/>
            <person name="Blesa R."/>
            <person name="Mauleon A."/>
            <person name="Roca M.R."/>
            <person name="Kornhuber J."/>
            <person name="Peters O."/>
            <person name="Heun R."/>
            <person name="Froelich L."/>
            <person name="Huell M."/>
            <person name="Heneka M.T."/>
            <person name="Ruether E."/>
            <person name="Riedel-Heller S."/>
            <person name="Scherer M."/>
            <person name="Wiltfang J."/>
            <person name="Jessen F."/>
            <person name="Becker T."/>
            <person name="Tarraga L."/>
            <person name="Boada M."/>
            <person name="Maier W."/>
            <person name="Lleo A."/>
            <person name="Ruiz A."/>
            <person name="Noethen M.M."/>
            <person name="Ramirez A."/>
        </authorList>
    </citation>
    <scope>LACK OF INVOLVEMENT IN ALZHEIMER DISEASE</scope>
    <scope>VARIANT MET-232</scope>
</reference>
<reference key="13">
    <citation type="journal article" date="2015" name="Nature">
        <title>PLD3 gene variants and Alzheimer's disease.</title>
        <authorList>
            <person name="Hooli B.V."/>
            <person name="Lill C.M."/>
            <person name="Mullin K."/>
            <person name="Qiao D."/>
            <person name="Lange C."/>
            <person name="Bertram L."/>
            <person name="Tanzi R.E."/>
        </authorList>
    </citation>
    <scope>LACK OF INVOLVEMENT IN ALZHEIMER DISEASE</scope>
    <scope>VARIANT MET-232</scope>
</reference>
<reference key="14">
    <citation type="journal article" date="2015" name="Nature">
        <title>Cruchaga &amp; Goate reply.</title>
        <authorList>
            <person name="Cruchaga C."/>
            <person name="Goate A.M."/>
        </authorList>
    </citation>
    <scope>POSSIBLE INVOLVEMENT IN ALZHEIMER DISEASE</scope>
    <scope>VARIANT MET-232</scope>
</reference>
<reference key="15">
    <citation type="journal article" date="2015" name="Proteomics">
        <title>N-terminome analysis of the human mitochondrial proteome.</title>
        <authorList>
            <person name="Vaca Jacome A.S."/>
            <person name="Rabilloud T."/>
            <person name="Schaeffer-Reiss C."/>
            <person name="Rompais M."/>
            <person name="Ayoub D."/>
            <person name="Lane L."/>
            <person name="Bairoch A."/>
            <person name="Van Dorsselaer A."/>
            <person name="Carapito C."/>
        </authorList>
    </citation>
    <scope>IDENTIFICATION BY MASS SPECTROMETRY [LARGE SCALE ANALYSIS]</scope>
</reference>
<reference key="16">
    <citation type="journal article" date="2017" name="Brain">
        <title>Exome sequencing and network analysis identifies shared mechanisms underlying spinocerebellar ataxia.</title>
        <authorList>
            <person name="Nibbeling E.A.R."/>
            <person name="Duarri A."/>
            <person name="Verschuuren-Bemelmans C.C."/>
            <person name="Fokkens M.R."/>
            <person name="Karjalainen J.M."/>
            <person name="Smeets C.J.L.M."/>
            <person name="de Boer-Bergsma J.J."/>
            <person name="van der Vries G."/>
            <person name="Dooijes D."/>
            <person name="Bampi G.B."/>
            <person name="van Diemen C."/>
            <person name="Brunt E."/>
            <person name="Ippel E."/>
            <person name="Kremer B."/>
            <person name="Vlak M."/>
            <person name="Adir N."/>
            <person name="Wijmenga C."/>
            <person name="van de Warrenburg B.P.C."/>
            <person name="Franke L."/>
            <person name="Sinke R.J."/>
            <person name="Verbeek D.S."/>
        </authorList>
    </citation>
    <scope>INVOLVEMENT IN SCA46</scope>
    <scope>VARIANT SCA46 PRO-308</scope>
    <scope>GLYCOSYLATION</scope>
</reference>
<reference key="17">
    <citation type="journal article" date="2017" name="Nature">
        <title>PLD3 gene and processing of APP.</title>
        <authorList>
            <person name="Fazzari P."/>
            <person name="Horre K."/>
            <person name="Arranz A.M."/>
            <person name="Frigerio C.S."/>
            <person name="Saito T."/>
            <person name="Saido T.C."/>
            <person name="De Strooper B."/>
        </authorList>
    </citation>
    <scope>LACK OF INVOLVEMENT IN ALZHEIMER DISEASE</scope>
    <scope>TISSUE SPECIFICITY</scope>
    <scope>CHARACTERIZATION OF VARIANTS MET-232</scope>
    <scope>FUNCTION</scope>
    <scope>MUTAGENESIS OF LYS-418</scope>
</reference>
<reference key="18">
    <citation type="journal article" date="2018" name="Brain">
        <title>PLD3 and spinocerebellar ataxia.</title>
        <authorList>
            <person name="Gonzalez A.C."/>
            <person name="Stroobants S."/>
            <person name="Reisdorf P."/>
            <person name="Gavin A.L."/>
            <person name="Nemazee D."/>
            <person name="Schwudke D."/>
            <person name="D'Hooge R."/>
            <person name="Saftig P."/>
            <person name="Damme M."/>
        </authorList>
    </citation>
    <scope>CHARACTERIZATION OF VARIANT SCA46 PRO-308</scope>
    <scope>FUNCTION</scope>
    <scope>CATALYTIC ACTIVITY</scope>
    <scope>SUBCELLULAR LOCATION</scope>
</reference>
<reference key="19">
    <citation type="journal article" date="2018" name="Cell. Mol. Life Sci.">
        <title>Analysis of novel endosome-to-Golgi retrieval genes reveals a role for PLD3 in regulating endosomal protein sorting and amyloid precursor protein processing.</title>
        <authorList>
            <person name="Mukadam A.S."/>
            <person name="Breusegem S.Y."/>
            <person name="Seaman M.N.J."/>
        </authorList>
    </citation>
    <scope>FUNCTION</scope>
    <scope>SUBCELLULAR LOCATION</scope>
    <scope>TOPOLOGY</scope>
</reference>
<reference key="20">
    <citation type="journal article" date="2018" name="Cell Rep.">
        <title>Unconventional Trafficking of Mammalian Phospholipase D3 to Lysosomes.</title>
        <authorList>
            <person name="Gonzalez A.C."/>
            <person name="Schweizer M."/>
            <person name="Jagdmann S."/>
            <person name="Bernreuther C."/>
            <person name="Reinheckel T."/>
            <person name="Saftig P."/>
            <person name="Damme M."/>
        </authorList>
    </citation>
    <scope>SUBCELLULAR LOCATION</scope>
    <scope>GLYCOSYLATION</scope>
    <scope>MUTAGENESIS OF TYR-7</scope>
</reference>
<reference key="21">
    <citation type="journal article" date="2018" name="Nat. Immunol.">
        <title>PLD3 and PLD4 are single-stranded acid exonucleases that regulate endosomal nucleic-acid sensing.</title>
        <authorList>
            <person name="Gavin A.L."/>
            <person name="Huang D."/>
            <person name="Huber C."/>
            <person name="Maartensson A."/>
            <person name="Tardif V."/>
            <person name="Skog P.D."/>
            <person name="Blane T.R."/>
            <person name="Thinnes T.C."/>
            <person name="Osborn K."/>
            <person name="Chong H.S."/>
            <person name="Kargaran F."/>
            <person name="Kimm P."/>
            <person name="Zeitjian A."/>
            <person name="Sielski R.L."/>
            <person name="Briggs M."/>
            <person name="Schulz S.R."/>
            <person name="Zarpellon A."/>
            <person name="Cravatt B."/>
            <person name="Pang E.S."/>
            <person name="Teijaro J."/>
            <person name="de la Torre J.C."/>
            <person name="O'Keeffe M."/>
            <person name="Hochrein H."/>
            <person name="Damme M."/>
            <person name="Teyton L."/>
            <person name="Lawson B.R."/>
            <person name="Nemazee D."/>
        </authorList>
    </citation>
    <scope>FUNCTION</scope>
    <scope>CATALYTIC ACTIVITY</scope>
    <scope>BIOPHYSICOCHEMICAL PROPERTIES</scope>
</reference>
<reference key="22">
    <citation type="journal article" date="2021" name="Nat. Commun.">
        <title>Cleavage of DNA and RNA by PLD3 and PLD4 limits autoinflammatory triggering by multiple sensors.</title>
        <authorList>
            <person name="Gavin A.L."/>
            <person name="Huang D."/>
            <person name="Blane T.R."/>
            <person name="Thinnes T.C."/>
            <person name="Murakami Y."/>
            <person name="Fukui R."/>
            <person name="Miyake K."/>
            <person name="Nemazee D."/>
        </authorList>
    </citation>
    <scope>FUNCTION</scope>
    <scope>CATALYTIC ACTIVITY</scope>
    <scope>BIOPHYSICOCHEMICAL PROPERTIES</scope>
</reference>
<reference key="23">
    <citation type="journal article" date="2023" name="Nat. Commun.">
        <title>Phospholipase D3 degrades mitochondrial DNA to regulate nucleotide signaling and APP metabolism.</title>
        <authorList>
            <person name="Van Acker Z.P."/>
            <person name="Perdok A."/>
            <person name="Hellemans R."/>
            <person name="North K."/>
            <person name="Vorsters I."/>
            <person name="Cappel C."/>
            <person name="Dehairs J."/>
            <person name="Swinnen J.V."/>
            <person name="Sannerud R."/>
            <person name="Bretou M."/>
            <person name="Damme M."/>
            <person name="Annaert W."/>
        </authorList>
    </citation>
    <scope>FUNCTION</scope>
    <scope>CATALYTIC ACTIVITY</scope>
    <scope>CHARACTERIZATION OF VARIANTS MET-232; SER-284 AND ALA-426</scope>
    <scope>MUTAGENESIS OF MET-6; LYS-228 AND ASN-236</scope>
</reference>
<reference key="24">
    <citation type="journal article" date="2024" name="Cell">
        <title>PLD3 and PLD4 synthesize S,S-BMP, a key phospholipid enabling lipid degradation in lysosomes.</title>
        <authorList>
            <person name="Singh S."/>
            <person name="Dransfeld U.E."/>
            <person name="Ambaw Y.A."/>
            <person name="Lopez-Scarim J."/>
            <person name="Farese R.V. Jr."/>
            <person name="Walther T.C."/>
        </authorList>
    </citation>
    <scope>FUNCTION</scope>
    <scope>CATALYTIC ACTIVITY</scope>
    <scope>SUBCELLULAR LOCATION</scope>
    <scope>MUTAGENESIS OF HIS-201; LYS-203; ASP-208; HIS-416; LYS-418 AND GLU-423</scope>
    <scope>CHARACTERIZATION OF VARIANT MET-232</scope>
    <scope>CHARACTERIZATION OF VARIANT SCA46 PRO-308</scope>
</reference>
<reference key="25">
    <citation type="journal article" date="2024" name="Structure">
        <title>Structural and mechanistic insights into disease-associated endolysosomal exonucleases PLD3 and PLD4.</title>
        <authorList>
            <person name="Yuan M."/>
            <person name="Peng L."/>
            <person name="Huang D."/>
            <person name="Gavin A."/>
            <person name="Luan F."/>
            <person name="Tran J."/>
            <person name="Feng Z."/>
            <person name="Zhu X."/>
            <person name="Matteson J."/>
            <person name="Wilson I.A."/>
            <person name="Nemazee D."/>
        </authorList>
    </citation>
    <scope>FUNCTION</scope>
    <scope>CATALYTIC ACTIVITY</scope>
    <scope>ACTIVITY REGULATION</scope>
    <scope>BIOPHYSICOCHEMICAL PROPERTIES</scope>
    <scope>CHARACTERIZATION OF VARIANT SCA46 PRO-308</scope>
    <scope>VARIANT MET-232</scope>
    <scope>MUTAGENESIS OF ILE-163; ARG-356 AND PRO-410</scope>
</reference>
<reference evidence="39" key="26">
    <citation type="journal article" date="2024" name="Immunity">
        <title>Lysosomal endonuclease RNase T2 and PLD exonucleases cooperatively generate RNA ligands for TLR7 activation.</title>
        <authorList>
            <person name="Berouti M."/>
            <person name="Lammens K."/>
            <person name="Heiss M."/>
            <person name="Hansbauer L."/>
            <person name="Bauernfried S."/>
            <person name="Stoeckl J."/>
            <person name="Pinci F."/>
            <person name="Piseddu I."/>
            <person name="Greulich W."/>
            <person name="Wang M."/>
            <person name="Jung C."/>
            <person name="Froehlich T."/>
            <person name="Carell T."/>
            <person name="Hopfner K.P."/>
            <person name="Hornung V."/>
        </authorList>
    </citation>
    <scope>STRUCTURE BY ELECTRON MICROSCOPY (2.80 ANGSTROMS) OF 60-490</scope>
    <scope>FUNCTION</scope>
    <scope>CATALYTIC ACTIVITY</scope>
    <scope>TISSUE SPECIFICITY</scope>
    <scope>SUBUNIT</scope>
    <scope>DOMAIN</scope>
    <scope>MUTAGENESIS OF HIS-201; HIS-337; HIS-339; ARG-340; HIS-388; HIS-390; TYR-411 AND HIS-416</scope>
    <scope>CHARACTERIZATION OF VARIANT SCA46 PRO-308</scope>
    <scope>CHARACTERIZATION OF VARIANT MET-232</scope>
</reference>
<reference evidence="37 38" key="27">
    <citation type="journal article" date="2024" name="Nucleic Acids Res.">
        <title>Structural analysis of PLD3 reveals insights into the mechanism of lysosomal 5' exonuclease-mediated nucleic acid degradation.</title>
        <authorList>
            <person name="Roske Y."/>
            <person name="Cappel C."/>
            <person name="Cremer N."/>
            <person name="Hoffmann P."/>
            <person name="Koudelka T."/>
            <person name="Tholey A."/>
            <person name="Heinemann U."/>
            <person name="Daumke O."/>
            <person name="Damme M."/>
        </authorList>
    </citation>
    <scope>X-RAY CRYSTALLOGRAPHY (1.51 ANGSTROMS) OF 72-490 IN COMPLEX WITH MG(2+)</scope>
    <scope>SUBUNIT</scope>
    <scope>DOMAIN</scope>
    <scope>GLYCOSYLATION AT ASN-97; ASN-132; ASN-236; ASN-284 AND ASN-387</scope>
    <scope>PROTEOLYTIC CLEAVAGE</scope>
    <scope>FUNCTION</scope>
    <scope>MUTAGENESIS OF CYS-300; ARG-350; TYR-354; PHE-377; SER-380; LYS-418; GLU-423 AND ASN-432</scope>
</reference>
<name>PLD3_HUMAN</name>
<keyword id="KW-0002">3D-structure</keyword>
<keyword id="KW-0225">Disease variant</keyword>
<keyword id="KW-1015">Disulfide bond</keyword>
<keyword id="KW-0256">Endoplasmic reticulum</keyword>
<keyword id="KW-0967">Endosome</keyword>
<keyword id="KW-0269">Exonuclease</keyword>
<keyword id="KW-0325">Glycoprotein</keyword>
<keyword id="KW-0333">Golgi apparatus</keyword>
<keyword id="KW-0378">Hydrolase</keyword>
<keyword id="KW-0391">Immunity</keyword>
<keyword id="KW-0395">Inflammatory response</keyword>
<keyword id="KW-0443">Lipid metabolism</keyword>
<keyword id="KW-0458">Lysosome</keyword>
<keyword id="KW-0472">Membrane</keyword>
<keyword id="KW-0523">Neurodegeneration</keyword>
<keyword id="KW-0540">Nuclease</keyword>
<keyword id="KW-1208">Phospholipid metabolism</keyword>
<keyword id="KW-1267">Proteomics identification</keyword>
<keyword id="KW-1185">Reference proteome</keyword>
<keyword id="KW-0677">Repeat</keyword>
<keyword id="KW-0735">Signal-anchor</keyword>
<keyword id="KW-0950">Spinocerebellar ataxia</keyword>
<keyword id="KW-0812">Transmembrane</keyword>
<keyword id="KW-1133">Transmembrane helix</keyword>
<keyword id="KW-0832">Ubl conjugation</keyword>
<organism>
    <name type="scientific">Homo sapiens</name>
    <name type="common">Human</name>
    <dbReference type="NCBI Taxonomy" id="9606"/>
    <lineage>
        <taxon>Eukaryota</taxon>
        <taxon>Metazoa</taxon>
        <taxon>Chordata</taxon>
        <taxon>Craniata</taxon>
        <taxon>Vertebrata</taxon>
        <taxon>Euteleostomi</taxon>
        <taxon>Mammalia</taxon>
        <taxon>Eutheria</taxon>
        <taxon>Euarchontoglires</taxon>
        <taxon>Primates</taxon>
        <taxon>Haplorrhini</taxon>
        <taxon>Catarrhini</taxon>
        <taxon>Hominidae</taxon>
        <taxon>Homo</taxon>
    </lineage>
</organism>
<sequence>MKPKLMYQELKVPAEEPANELPMNEIEAWKAAEKKARWVLLVLILAVVGFGALMTQLFLWEYGDLHLFGPNQRPAPCYDPCEAVLVESIPEGLDFPNASTGNPSTSQAWLGLLAGAHSSLDIASFYWTLTNNDTHTQEPSAQQGEEVLRQLQTLAPKGVNVRIAVSKPSGPQPQADLQALLQSGAQVRMVDMQKLTHGVLHTKFWVVDQTHFYLGSANMDWRSLTQVKELGVVMYNCSCLARDLTKIFEAYWFLGQAGSSIPSTWPRFYDTRYNQETPMEICLNGTPALAYLASAPPPLCPSGRTPDLKALLNVVDNARSFIYVAVMNYLPTLEFSHPHRFWPAIDDGLRRATYERGVKVRLLISCWGHSEPSMRAFLLSLAALRDNHTHSDIQVKLFVVPADEAQARIPYARVNHNKYMVTERATYIGTSNWSGNYFTETAGTSLLVTQNGRGGLRSQLEAIFLRDWDSPYSHDLDTSADSVGNACRLL</sequence>
<gene>
    <name evidence="26 36" type="primary">PLD3</name>
</gene>
<evidence type="ECO:0000250" key="1">
    <source>
        <dbReference type="UniProtKB" id="O35405"/>
    </source>
</evidence>
<evidence type="ECO:0000255" key="2">
    <source>
        <dbReference type="PROSITE-ProRule" id="PRU00153"/>
    </source>
</evidence>
<evidence type="ECO:0000269" key="3">
    <source>
    </source>
</evidence>
<evidence type="ECO:0000269" key="4">
    <source>
    </source>
</evidence>
<evidence type="ECO:0000269" key="5">
    <source>
    </source>
</evidence>
<evidence type="ECO:0000269" key="6">
    <source>
    </source>
</evidence>
<evidence type="ECO:0000269" key="7">
    <source>
    </source>
</evidence>
<evidence type="ECO:0000269" key="8">
    <source>
    </source>
</evidence>
<evidence type="ECO:0000269" key="9">
    <source>
    </source>
</evidence>
<evidence type="ECO:0000269" key="10">
    <source>
    </source>
</evidence>
<evidence type="ECO:0000269" key="11">
    <source>
    </source>
</evidence>
<evidence type="ECO:0000269" key="12">
    <source>
    </source>
</evidence>
<evidence type="ECO:0000269" key="13">
    <source>
    </source>
</evidence>
<evidence type="ECO:0000269" key="14">
    <source>
    </source>
</evidence>
<evidence type="ECO:0000269" key="15">
    <source>
    </source>
</evidence>
<evidence type="ECO:0000269" key="16">
    <source>
    </source>
</evidence>
<evidence type="ECO:0000269" key="17">
    <source>
    </source>
</evidence>
<evidence type="ECO:0000269" key="18">
    <source>
    </source>
</evidence>
<evidence type="ECO:0000269" key="19">
    <source>
    </source>
</evidence>
<evidence type="ECO:0000269" key="20">
    <source>
    </source>
</evidence>
<evidence type="ECO:0000269" key="21">
    <source>
    </source>
</evidence>
<evidence type="ECO:0000269" key="22">
    <source>
    </source>
</evidence>
<evidence type="ECO:0000269" key="23">
    <source>
    </source>
</evidence>
<evidence type="ECO:0000269" key="24">
    <source>
    </source>
</evidence>
<evidence type="ECO:0000303" key="25">
    <source>
    </source>
</evidence>
<evidence type="ECO:0000303" key="26">
    <source>
    </source>
</evidence>
<evidence type="ECO:0000305" key="27"/>
<evidence type="ECO:0000305" key="28">
    <source>
    </source>
</evidence>
<evidence type="ECO:0000305" key="29">
    <source>
    </source>
</evidence>
<evidence type="ECO:0000305" key="30">
    <source>
    </source>
</evidence>
<evidence type="ECO:0000305" key="31">
    <source>
    </source>
</evidence>
<evidence type="ECO:0000305" key="32">
    <source>
    </source>
</evidence>
<evidence type="ECO:0000305" key="33">
    <source>
    </source>
</evidence>
<evidence type="ECO:0000305" key="34">
    <source>
    </source>
</evidence>
<evidence type="ECO:0000305" key="35">
    <source>
    </source>
</evidence>
<evidence type="ECO:0000312" key="36">
    <source>
        <dbReference type="HGNC" id="HGNC:17158"/>
    </source>
</evidence>
<evidence type="ECO:0007744" key="37">
    <source>
        <dbReference type="PDB" id="8Q1K"/>
    </source>
</evidence>
<evidence type="ECO:0007744" key="38">
    <source>
        <dbReference type="PDB" id="8Q1X"/>
    </source>
</evidence>
<evidence type="ECO:0007744" key="39">
    <source>
        <dbReference type="PDB" id="8S86"/>
    </source>
</evidence>
<evidence type="ECO:0007829" key="40">
    <source>
        <dbReference type="PDB" id="8Q1K"/>
    </source>
</evidence>
<evidence type="ECO:0007829" key="41">
    <source>
        <dbReference type="PDB" id="8S86"/>
    </source>
</evidence>
<dbReference type="EC" id="3.1.16.1" evidence="17 18"/>
<dbReference type="EC" id="3.1.4.-" evidence="24"/>
<dbReference type="EMBL" id="U60644">
    <property type="protein sequence ID" value="AAB16799.1"/>
    <property type="status" value="ALT_FRAME"/>
    <property type="molecule type" value="mRNA"/>
</dbReference>
<dbReference type="EMBL" id="BC000553">
    <property type="protein sequence ID" value="AAH00553.2"/>
    <property type="molecule type" value="mRNA"/>
</dbReference>
<dbReference type="EMBL" id="BC036327">
    <property type="protein sequence ID" value="AAH36327.1"/>
    <property type="molecule type" value="mRNA"/>
</dbReference>
<dbReference type="EMBL" id="BC096820">
    <property type="protein sequence ID" value="AAH96820.1"/>
    <property type="molecule type" value="mRNA"/>
</dbReference>
<dbReference type="CCDS" id="CCDS33027.1"/>
<dbReference type="RefSeq" id="NP_001026866.1">
    <property type="nucleotide sequence ID" value="NM_001031696.4"/>
</dbReference>
<dbReference type="RefSeq" id="NP_001278240.1">
    <property type="nucleotide sequence ID" value="NM_001291311.2"/>
</dbReference>
<dbReference type="RefSeq" id="NP_036400.2">
    <property type="nucleotide sequence ID" value="NM_012268.4"/>
</dbReference>
<dbReference type="RefSeq" id="XP_005258761.1">
    <property type="nucleotide sequence ID" value="XM_005258704.1"/>
</dbReference>
<dbReference type="RefSeq" id="XP_005258764.1">
    <property type="nucleotide sequence ID" value="XM_005258707.4"/>
</dbReference>
<dbReference type="RefSeq" id="XP_005258765.1">
    <property type="nucleotide sequence ID" value="XM_005258708.3"/>
</dbReference>
<dbReference type="RefSeq" id="XP_005258766.1">
    <property type="nucleotide sequence ID" value="XM_005258709.4"/>
</dbReference>
<dbReference type="RefSeq" id="XP_005258767.1">
    <property type="nucleotide sequence ID" value="XM_005258710.4"/>
</dbReference>
<dbReference type="RefSeq" id="XP_006723185.1">
    <property type="nucleotide sequence ID" value="XM_006723122.1"/>
</dbReference>
<dbReference type="RefSeq" id="XP_011524994.1">
    <property type="nucleotide sequence ID" value="XM_011526692.1"/>
</dbReference>
<dbReference type="RefSeq" id="XP_011524995.1">
    <property type="nucleotide sequence ID" value="XM_011526693.1"/>
</dbReference>
<dbReference type="RefSeq" id="XP_016882035.1">
    <property type="nucleotide sequence ID" value="XM_017026546.1"/>
</dbReference>
<dbReference type="RefSeq" id="XP_016882036.1">
    <property type="nucleotide sequence ID" value="XM_017026547.1"/>
</dbReference>
<dbReference type="RefSeq" id="XP_016882037.1">
    <property type="nucleotide sequence ID" value="XM_017026548.1"/>
</dbReference>
<dbReference type="RefSeq" id="XP_016882038.1">
    <property type="nucleotide sequence ID" value="XM_017026549.1"/>
</dbReference>
<dbReference type="PDB" id="8Q1K">
    <property type="method" value="X-ray"/>
    <property type="resolution" value="1.51 A"/>
    <property type="chains" value="A/B=72-490"/>
</dbReference>
<dbReference type="PDB" id="8Q1X">
    <property type="method" value="X-ray"/>
    <property type="resolution" value="1.85 A"/>
    <property type="chains" value="A/B=61-490"/>
</dbReference>
<dbReference type="PDB" id="8S86">
    <property type="method" value="EM"/>
    <property type="resolution" value="2.80 A"/>
    <property type="chains" value="A/B=60-490"/>
</dbReference>
<dbReference type="PDB" id="8V5T">
    <property type="method" value="X-ray"/>
    <property type="resolution" value="2.30 A"/>
    <property type="chains" value="A/B=1-490"/>
</dbReference>
<dbReference type="PDBsum" id="8Q1K"/>
<dbReference type="PDBsum" id="8Q1X"/>
<dbReference type="PDBsum" id="8S86"/>
<dbReference type="PDBsum" id="8V5T"/>
<dbReference type="EMDB" id="EMD-19798"/>
<dbReference type="SMR" id="Q8IV08"/>
<dbReference type="BioGRID" id="117173">
    <property type="interactions" value="260"/>
</dbReference>
<dbReference type="FunCoup" id="Q8IV08">
    <property type="interactions" value="863"/>
</dbReference>
<dbReference type="IntAct" id="Q8IV08">
    <property type="interactions" value="53"/>
</dbReference>
<dbReference type="MINT" id="Q8IV08"/>
<dbReference type="STRING" id="9606.ENSP00000387050"/>
<dbReference type="BindingDB" id="Q8IV08"/>
<dbReference type="ChEMBL" id="CHEMBL2769"/>
<dbReference type="GlyConnect" id="1604">
    <property type="glycosylation" value="14 N-Linked glycans (3 sites)"/>
</dbReference>
<dbReference type="GlyCosmos" id="Q8IV08">
    <property type="glycosylation" value="5 sites, 14 glycans"/>
</dbReference>
<dbReference type="GlyGen" id="Q8IV08">
    <property type="glycosylation" value="7 sites, 36 N-linked glycans (4 sites), 2 N-linked;o-linked glycans (1 site), 1 O-linked glycan (1 site)"/>
</dbReference>
<dbReference type="iPTMnet" id="Q8IV08"/>
<dbReference type="PhosphoSitePlus" id="Q8IV08"/>
<dbReference type="SwissPalm" id="Q8IV08"/>
<dbReference type="BioMuta" id="PLD3"/>
<dbReference type="DMDM" id="74750647"/>
<dbReference type="jPOST" id="Q8IV08"/>
<dbReference type="MassIVE" id="Q8IV08"/>
<dbReference type="PaxDb" id="9606-ENSP00000387050"/>
<dbReference type="PeptideAtlas" id="Q8IV08"/>
<dbReference type="ProteomicsDB" id="70639"/>
<dbReference type="Pumba" id="Q8IV08"/>
<dbReference type="TopDownProteomics" id="Q8IV08"/>
<dbReference type="Antibodypedia" id="2295">
    <property type="antibodies" value="133 antibodies from 24 providers"/>
</dbReference>
<dbReference type="DNASU" id="23646"/>
<dbReference type="Ensembl" id="ENST00000356508.9">
    <property type="protein sequence ID" value="ENSP00000348901.5"/>
    <property type="gene ID" value="ENSG00000105223.21"/>
</dbReference>
<dbReference type="Ensembl" id="ENST00000409281.5">
    <property type="protein sequence ID" value="ENSP00000387022.1"/>
    <property type="gene ID" value="ENSG00000105223.21"/>
</dbReference>
<dbReference type="Ensembl" id="ENST00000409419.5">
    <property type="protein sequence ID" value="ENSP00000386293.1"/>
    <property type="gene ID" value="ENSG00000105223.21"/>
</dbReference>
<dbReference type="Ensembl" id="ENST00000409587.5">
    <property type="protein sequence ID" value="ENSP00000387050.1"/>
    <property type="gene ID" value="ENSG00000105223.21"/>
</dbReference>
<dbReference type="Ensembl" id="ENST00000409735.9">
    <property type="protein sequence ID" value="ENSP00000386938.3"/>
    <property type="gene ID" value="ENSG00000105223.21"/>
</dbReference>
<dbReference type="Ensembl" id="ENST00000700616.1">
    <property type="protein sequence ID" value="ENSP00000515107.1"/>
    <property type="gene ID" value="ENSG00000105223.21"/>
</dbReference>
<dbReference type="Ensembl" id="ENST00000700619.1">
    <property type="protein sequence ID" value="ENSP00000515110.1"/>
    <property type="gene ID" value="ENSG00000105223.21"/>
</dbReference>
<dbReference type="Ensembl" id="ENST00000700620.1">
    <property type="protein sequence ID" value="ENSP00000515111.1"/>
    <property type="gene ID" value="ENSG00000105223.21"/>
</dbReference>
<dbReference type="Ensembl" id="ENST00000700621.1">
    <property type="protein sequence ID" value="ENSP00000515112.1"/>
    <property type="gene ID" value="ENSG00000105223.21"/>
</dbReference>
<dbReference type="Ensembl" id="ENST00000700623.1">
    <property type="protein sequence ID" value="ENSP00000515113.1"/>
    <property type="gene ID" value="ENSG00000105223.21"/>
</dbReference>
<dbReference type="Ensembl" id="ENST00000700625.1">
    <property type="protein sequence ID" value="ENSP00000515115.1"/>
    <property type="gene ID" value="ENSG00000105223.21"/>
</dbReference>
<dbReference type="Ensembl" id="ENST00000700626.1">
    <property type="protein sequence ID" value="ENSP00000515116.1"/>
    <property type="gene ID" value="ENSG00000105223.21"/>
</dbReference>
<dbReference type="Ensembl" id="ENST00000700628.1">
    <property type="protein sequence ID" value="ENSP00000515117.1"/>
    <property type="gene ID" value="ENSG00000105223.21"/>
</dbReference>
<dbReference type="Ensembl" id="ENST00000700630.1">
    <property type="protein sequence ID" value="ENSP00000515118.1"/>
    <property type="gene ID" value="ENSG00000105223.21"/>
</dbReference>
<dbReference type="Ensembl" id="ENST00000700631.1">
    <property type="protein sequence ID" value="ENSP00000515119.1"/>
    <property type="gene ID" value="ENSG00000105223.21"/>
</dbReference>
<dbReference type="Ensembl" id="ENST00000700632.1">
    <property type="protein sequence ID" value="ENSP00000515120.1"/>
    <property type="gene ID" value="ENSG00000105223.21"/>
</dbReference>
<dbReference type="Ensembl" id="ENST00000700633.1">
    <property type="protein sequence ID" value="ENSP00000515121.1"/>
    <property type="gene ID" value="ENSG00000105223.21"/>
</dbReference>
<dbReference type="Ensembl" id="ENST00000700634.1">
    <property type="protein sequence ID" value="ENSP00000515122.1"/>
    <property type="gene ID" value="ENSG00000105223.21"/>
</dbReference>
<dbReference type="Ensembl" id="ENST00000700637.1">
    <property type="protein sequence ID" value="ENSP00000515123.1"/>
    <property type="gene ID" value="ENSG00000105223.21"/>
</dbReference>
<dbReference type="GeneID" id="23646"/>
<dbReference type="KEGG" id="hsa:23646"/>
<dbReference type="MANE-Select" id="ENST00000409735.9">
    <property type="protein sequence ID" value="ENSP00000386938.3"/>
    <property type="RefSeq nucleotide sequence ID" value="NM_012268.4"/>
    <property type="RefSeq protein sequence ID" value="NP_036400.2"/>
</dbReference>
<dbReference type="UCSC" id="uc002onj.5">
    <property type="organism name" value="human"/>
</dbReference>
<dbReference type="AGR" id="HGNC:17158"/>
<dbReference type="CTD" id="23646"/>
<dbReference type="DisGeNET" id="23646"/>
<dbReference type="GeneCards" id="PLD3"/>
<dbReference type="HGNC" id="HGNC:17158">
    <property type="gene designation" value="PLD3"/>
</dbReference>
<dbReference type="HPA" id="ENSG00000105223">
    <property type="expression patterns" value="Tissue enhanced (pituitary)"/>
</dbReference>
<dbReference type="MalaCards" id="PLD3"/>
<dbReference type="MIM" id="615698">
    <property type="type" value="gene"/>
</dbReference>
<dbReference type="MIM" id="617770">
    <property type="type" value="phenotype"/>
</dbReference>
<dbReference type="neXtProt" id="NX_Q8IV08"/>
<dbReference type="OpenTargets" id="ENSG00000105223"/>
<dbReference type="Orphanet" id="589522">
    <property type="disease" value="Spinocerebellar ataxia type 46"/>
</dbReference>
<dbReference type="PharmGKB" id="PA134887482"/>
<dbReference type="VEuPathDB" id="HostDB:ENSG00000105223"/>
<dbReference type="eggNOG" id="KOG3603">
    <property type="taxonomic scope" value="Eukaryota"/>
</dbReference>
<dbReference type="GeneTree" id="ENSGT00950000183059"/>
<dbReference type="HOGENOM" id="CLU_027021_0_0_1"/>
<dbReference type="InParanoid" id="Q8IV08"/>
<dbReference type="OMA" id="RDNHTHF"/>
<dbReference type="OrthoDB" id="1923775at2759"/>
<dbReference type="PAN-GO" id="Q8IV08">
    <property type="GO annotations" value="0 GO annotations based on evolutionary models"/>
</dbReference>
<dbReference type="PhylomeDB" id="Q8IV08"/>
<dbReference type="TreeFam" id="TF313378"/>
<dbReference type="PathwayCommons" id="Q8IV08"/>
<dbReference type="Reactome" id="R-HSA-1483148">
    <property type="pathway name" value="Synthesis of PG"/>
</dbReference>
<dbReference type="Reactome" id="R-HSA-2029485">
    <property type="pathway name" value="Role of phospholipids in phagocytosis"/>
</dbReference>
<dbReference type="SignaLink" id="Q8IV08"/>
<dbReference type="SIGNOR" id="Q8IV08"/>
<dbReference type="BioGRID-ORCS" id="23646">
    <property type="hits" value="16 hits in 1172 CRISPR screens"/>
</dbReference>
<dbReference type="CD-CODE" id="FB4E32DD">
    <property type="entry name" value="Presynaptic clusters and postsynaptic densities"/>
</dbReference>
<dbReference type="ChiTaRS" id="PLD3">
    <property type="organism name" value="human"/>
</dbReference>
<dbReference type="GenomeRNAi" id="23646"/>
<dbReference type="Pharos" id="Q8IV08">
    <property type="development level" value="Tbio"/>
</dbReference>
<dbReference type="PRO" id="PR:Q8IV08"/>
<dbReference type="Proteomes" id="UP000005640">
    <property type="component" value="Chromosome 19"/>
</dbReference>
<dbReference type="RNAct" id="Q8IV08">
    <property type="molecule type" value="protein"/>
</dbReference>
<dbReference type="Bgee" id="ENSG00000105223">
    <property type="expression patterns" value="Expressed in adenohypophysis and 197 other cell types or tissues"/>
</dbReference>
<dbReference type="ExpressionAtlas" id="Q8IV08">
    <property type="expression patterns" value="baseline and differential"/>
</dbReference>
<dbReference type="GO" id="GO:0031901">
    <property type="term" value="C:early endosome membrane"/>
    <property type="evidence" value="ECO:0000314"/>
    <property type="project" value="UniProtKB"/>
</dbReference>
<dbReference type="GO" id="GO:0005789">
    <property type="term" value="C:endoplasmic reticulum membrane"/>
    <property type="evidence" value="ECO:0000314"/>
    <property type="project" value="UniProtKB"/>
</dbReference>
<dbReference type="GO" id="GO:0070062">
    <property type="term" value="C:extracellular exosome"/>
    <property type="evidence" value="ECO:0007005"/>
    <property type="project" value="UniProtKB"/>
</dbReference>
<dbReference type="GO" id="GO:0000139">
    <property type="term" value="C:Golgi membrane"/>
    <property type="evidence" value="ECO:0000314"/>
    <property type="project" value="UniProtKB"/>
</dbReference>
<dbReference type="GO" id="GO:0031902">
    <property type="term" value="C:late endosome membrane"/>
    <property type="evidence" value="ECO:0000314"/>
    <property type="project" value="UniProtKB"/>
</dbReference>
<dbReference type="GO" id="GO:0043202">
    <property type="term" value="C:lysosomal lumen"/>
    <property type="evidence" value="ECO:0000314"/>
    <property type="project" value="UniProtKB"/>
</dbReference>
<dbReference type="GO" id="GO:0005765">
    <property type="term" value="C:lysosomal membrane"/>
    <property type="evidence" value="ECO:0007669"/>
    <property type="project" value="Ensembl"/>
</dbReference>
<dbReference type="GO" id="GO:0004630">
    <property type="term" value="F:phospholipase D activity"/>
    <property type="evidence" value="ECO:0000304"/>
    <property type="project" value="ProtInc"/>
</dbReference>
<dbReference type="GO" id="GO:0045145">
    <property type="term" value="F:single-stranded DNA 5'-3' DNA exonuclease activity"/>
    <property type="evidence" value="ECO:0000314"/>
    <property type="project" value="UniProtKB"/>
</dbReference>
<dbReference type="GO" id="GO:0002376">
    <property type="term" value="P:immune system process"/>
    <property type="evidence" value="ECO:0007669"/>
    <property type="project" value="UniProtKB-KW"/>
</dbReference>
<dbReference type="GO" id="GO:0006954">
    <property type="term" value="P:inflammatory response"/>
    <property type="evidence" value="ECO:0007669"/>
    <property type="project" value="UniProtKB-KW"/>
</dbReference>
<dbReference type="GO" id="GO:0006629">
    <property type="term" value="P:lipid metabolic process"/>
    <property type="evidence" value="ECO:0007669"/>
    <property type="project" value="UniProtKB-KW"/>
</dbReference>
<dbReference type="GO" id="GO:0014902">
    <property type="term" value="P:myotube differentiation"/>
    <property type="evidence" value="ECO:0000314"/>
    <property type="project" value="UniProtKB"/>
</dbReference>
<dbReference type="GO" id="GO:1900015">
    <property type="term" value="P:regulation of cytokine production involved in inflammatory response"/>
    <property type="evidence" value="ECO:0000250"/>
    <property type="project" value="UniProtKB"/>
</dbReference>
<dbReference type="CDD" id="cd09144">
    <property type="entry name" value="PLDc_vPLD3_1"/>
    <property type="match status" value="1"/>
</dbReference>
<dbReference type="CDD" id="cd09147">
    <property type="entry name" value="PLDc_vPLD3_2"/>
    <property type="match status" value="1"/>
</dbReference>
<dbReference type="FunFam" id="3.30.870.10:FF:000013">
    <property type="entry name" value="phospholipase D3 isoform X1"/>
    <property type="match status" value="1"/>
</dbReference>
<dbReference type="FunFam" id="3.30.870.10:FF:000019">
    <property type="entry name" value="phospholipase D3 isoform X1"/>
    <property type="match status" value="1"/>
</dbReference>
<dbReference type="Gene3D" id="3.30.870.10">
    <property type="entry name" value="Endonuclease Chain A"/>
    <property type="match status" value="2"/>
</dbReference>
<dbReference type="InterPro" id="IPR050874">
    <property type="entry name" value="Diverse_PLD-related"/>
</dbReference>
<dbReference type="InterPro" id="IPR032803">
    <property type="entry name" value="PLDc_3"/>
</dbReference>
<dbReference type="InterPro" id="IPR001736">
    <property type="entry name" value="PLipase_D/transphosphatidylase"/>
</dbReference>
<dbReference type="PANTHER" id="PTHR10185:SF16">
    <property type="entry name" value="5'-3' EXONUCLEASE PLD3"/>
    <property type="match status" value="1"/>
</dbReference>
<dbReference type="PANTHER" id="PTHR10185">
    <property type="entry name" value="PHOSPHOLIPASE D - RELATED"/>
    <property type="match status" value="1"/>
</dbReference>
<dbReference type="Pfam" id="PF13918">
    <property type="entry name" value="PLDc_3"/>
    <property type="match status" value="1"/>
</dbReference>
<dbReference type="SMART" id="SM00155">
    <property type="entry name" value="PLDc"/>
    <property type="match status" value="2"/>
</dbReference>
<dbReference type="SUPFAM" id="SSF56024">
    <property type="entry name" value="Phospholipase D/nuclease"/>
    <property type="match status" value="2"/>
</dbReference>
<dbReference type="PROSITE" id="PS50035">
    <property type="entry name" value="PLD"/>
    <property type="match status" value="2"/>
</dbReference>